<evidence type="ECO:0000255" key="1">
    <source>
        <dbReference type="HAMAP-Rule" id="MF_01187"/>
    </source>
</evidence>
<feature type="chain" id="PRO_1000138332" description="UPF0434 protein YcaR">
    <location>
        <begin position="1"/>
        <end position="60"/>
    </location>
</feature>
<dbReference type="EMBL" id="CP001113">
    <property type="protein sequence ID" value="ACF61654.1"/>
    <property type="molecule type" value="Genomic_DNA"/>
</dbReference>
<dbReference type="RefSeq" id="WP_000350061.1">
    <property type="nucleotide sequence ID" value="NZ_CCMR01000003.1"/>
</dbReference>
<dbReference type="SMR" id="B4T151"/>
<dbReference type="KEGG" id="see:SNSL254_A1020"/>
<dbReference type="HOGENOM" id="CLU_155659_3_1_6"/>
<dbReference type="Proteomes" id="UP000008824">
    <property type="component" value="Chromosome"/>
</dbReference>
<dbReference type="GO" id="GO:0005829">
    <property type="term" value="C:cytosol"/>
    <property type="evidence" value="ECO:0007669"/>
    <property type="project" value="TreeGrafter"/>
</dbReference>
<dbReference type="FunFam" id="2.20.25.10:FF:000002">
    <property type="entry name" value="UPF0434 protein YcaR"/>
    <property type="match status" value="1"/>
</dbReference>
<dbReference type="Gene3D" id="2.20.25.10">
    <property type="match status" value="1"/>
</dbReference>
<dbReference type="HAMAP" id="MF_01187">
    <property type="entry name" value="UPF0434"/>
    <property type="match status" value="1"/>
</dbReference>
<dbReference type="InterPro" id="IPR005651">
    <property type="entry name" value="Trm112-like"/>
</dbReference>
<dbReference type="NCBIfam" id="NF008806">
    <property type="entry name" value="PRK11827.1"/>
    <property type="match status" value="1"/>
</dbReference>
<dbReference type="PANTHER" id="PTHR33505:SF4">
    <property type="entry name" value="PROTEIN PREY, MITOCHONDRIAL"/>
    <property type="match status" value="1"/>
</dbReference>
<dbReference type="PANTHER" id="PTHR33505">
    <property type="entry name" value="ZGC:162634"/>
    <property type="match status" value="1"/>
</dbReference>
<dbReference type="Pfam" id="PF03966">
    <property type="entry name" value="Trm112p"/>
    <property type="match status" value="1"/>
</dbReference>
<dbReference type="SUPFAM" id="SSF158997">
    <property type="entry name" value="Trm112p-like"/>
    <property type="match status" value="1"/>
</dbReference>
<proteinExistence type="inferred from homology"/>
<sequence length="60" mass="6856">MDHRLLEIIACPVCNGKLWYNQEQQELICKLDNLAFPLRDGIPVLLENEARALTSDESKS</sequence>
<gene>
    <name evidence="1" type="primary">ycaR</name>
    <name type="ordered locus">SNSL254_A1020</name>
</gene>
<accession>B4T151</accession>
<reference key="1">
    <citation type="journal article" date="2011" name="J. Bacteriol.">
        <title>Comparative genomics of 28 Salmonella enterica isolates: evidence for CRISPR-mediated adaptive sublineage evolution.</title>
        <authorList>
            <person name="Fricke W.F."/>
            <person name="Mammel M.K."/>
            <person name="McDermott P.F."/>
            <person name="Tartera C."/>
            <person name="White D.G."/>
            <person name="Leclerc J.E."/>
            <person name="Ravel J."/>
            <person name="Cebula T.A."/>
        </authorList>
    </citation>
    <scope>NUCLEOTIDE SEQUENCE [LARGE SCALE GENOMIC DNA]</scope>
    <source>
        <strain>SL254</strain>
    </source>
</reference>
<organism>
    <name type="scientific">Salmonella newport (strain SL254)</name>
    <dbReference type="NCBI Taxonomy" id="423368"/>
    <lineage>
        <taxon>Bacteria</taxon>
        <taxon>Pseudomonadati</taxon>
        <taxon>Pseudomonadota</taxon>
        <taxon>Gammaproteobacteria</taxon>
        <taxon>Enterobacterales</taxon>
        <taxon>Enterobacteriaceae</taxon>
        <taxon>Salmonella</taxon>
    </lineage>
</organism>
<comment type="similarity">
    <text evidence="1">Belongs to the UPF0434 family.</text>
</comment>
<protein>
    <recommendedName>
        <fullName evidence="1">UPF0434 protein YcaR</fullName>
    </recommendedName>
</protein>
<name>YCAR_SALNS</name>